<name>RL10_BACC4</name>
<feature type="chain" id="PRO_1000120915" description="Large ribosomal subunit protein uL10">
    <location>
        <begin position="1"/>
        <end position="166"/>
    </location>
</feature>
<keyword id="KW-0687">Ribonucleoprotein</keyword>
<keyword id="KW-0689">Ribosomal protein</keyword>
<keyword id="KW-0694">RNA-binding</keyword>
<keyword id="KW-0699">rRNA-binding</keyword>
<gene>
    <name evidence="1" type="primary">rplJ</name>
    <name type="ordered locus">BCB4264_A0120</name>
</gene>
<accession>B7HJ37</accession>
<organism>
    <name type="scientific">Bacillus cereus (strain B4264)</name>
    <dbReference type="NCBI Taxonomy" id="405532"/>
    <lineage>
        <taxon>Bacteria</taxon>
        <taxon>Bacillati</taxon>
        <taxon>Bacillota</taxon>
        <taxon>Bacilli</taxon>
        <taxon>Bacillales</taxon>
        <taxon>Bacillaceae</taxon>
        <taxon>Bacillus</taxon>
        <taxon>Bacillus cereus group</taxon>
    </lineage>
</organism>
<sequence length="166" mass="18037">MSKVIETKQQVVTEIADKLRASKSTIVVDYRGLTVSEATELRKQLREAGVEFKVYKNSLTRRAAESAEMAELNEFLTGPNAIAFSNEDVVAPAKVLNDFAKDHEALEIKAGVIEGKLVTLDEVKAIATLPSREGLLSMLLSVLQAPIRNLALATKAVADQKEEQGA</sequence>
<protein>
    <recommendedName>
        <fullName evidence="1">Large ribosomal subunit protein uL10</fullName>
    </recommendedName>
    <alternativeName>
        <fullName evidence="2">50S ribosomal protein L10</fullName>
    </alternativeName>
</protein>
<dbReference type="EMBL" id="CP001176">
    <property type="protein sequence ID" value="ACK60399.1"/>
    <property type="molecule type" value="Genomic_DNA"/>
</dbReference>
<dbReference type="RefSeq" id="WP_000048716.1">
    <property type="nucleotide sequence ID" value="NZ_VEHB01000017.1"/>
</dbReference>
<dbReference type="SMR" id="B7HJ37"/>
<dbReference type="GeneID" id="93010954"/>
<dbReference type="KEGG" id="bcb:BCB4264_A0120"/>
<dbReference type="HOGENOM" id="CLU_092227_2_0_9"/>
<dbReference type="Proteomes" id="UP000007096">
    <property type="component" value="Chromosome"/>
</dbReference>
<dbReference type="GO" id="GO:0015934">
    <property type="term" value="C:large ribosomal subunit"/>
    <property type="evidence" value="ECO:0007669"/>
    <property type="project" value="InterPro"/>
</dbReference>
<dbReference type="GO" id="GO:0070180">
    <property type="term" value="F:large ribosomal subunit rRNA binding"/>
    <property type="evidence" value="ECO:0007669"/>
    <property type="project" value="UniProtKB-UniRule"/>
</dbReference>
<dbReference type="GO" id="GO:0003735">
    <property type="term" value="F:structural constituent of ribosome"/>
    <property type="evidence" value="ECO:0007669"/>
    <property type="project" value="InterPro"/>
</dbReference>
<dbReference type="GO" id="GO:0006412">
    <property type="term" value="P:translation"/>
    <property type="evidence" value="ECO:0007669"/>
    <property type="project" value="UniProtKB-UniRule"/>
</dbReference>
<dbReference type="CDD" id="cd05797">
    <property type="entry name" value="Ribosomal_L10"/>
    <property type="match status" value="1"/>
</dbReference>
<dbReference type="FunFam" id="3.30.70.1730:FF:000001">
    <property type="entry name" value="50S ribosomal protein L10"/>
    <property type="match status" value="1"/>
</dbReference>
<dbReference type="Gene3D" id="3.30.70.1730">
    <property type="match status" value="1"/>
</dbReference>
<dbReference type="Gene3D" id="6.10.250.290">
    <property type="match status" value="1"/>
</dbReference>
<dbReference type="HAMAP" id="MF_00362">
    <property type="entry name" value="Ribosomal_uL10"/>
    <property type="match status" value="1"/>
</dbReference>
<dbReference type="InterPro" id="IPR001790">
    <property type="entry name" value="Ribosomal_uL10"/>
</dbReference>
<dbReference type="InterPro" id="IPR043141">
    <property type="entry name" value="Ribosomal_uL10-like_sf"/>
</dbReference>
<dbReference type="InterPro" id="IPR022973">
    <property type="entry name" value="Ribosomal_uL10_bac"/>
</dbReference>
<dbReference type="InterPro" id="IPR047865">
    <property type="entry name" value="Ribosomal_uL10_bac_type"/>
</dbReference>
<dbReference type="InterPro" id="IPR002363">
    <property type="entry name" value="Ribosomal_uL10_CS_bac"/>
</dbReference>
<dbReference type="NCBIfam" id="NF000955">
    <property type="entry name" value="PRK00099.1-1"/>
    <property type="match status" value="1"/>
</dbReference>
<dbReference type="PANTHER" id="PTHR11560">
    <property type="entry name" value="39S RIBOSOMAL PROTEIN L10, MITOCHONDRIAL"/>
    <property type="match status" value="1"/>
</dbReference>
<dbReference type="Pfam" id="PF00466">
    <property type="entry name" value="Ribosomal_L10"/>
    <property type="match status" value="1"/>
</dbReference>
<dbReference type="SUPFAM" id="SSF160369">
    <property type="entry name" value="Ribosomal protein L10-like"/>
    <property type="match status" value="1"/>
</dbReference>
<dbReference type="PROSITE" id="PS01109">
    <property type="entry name" value="RIBOSOMAL_L10"/>
    <property type="match status" value="1"/>
</dbReference>
<reference key="1">
    <citation type="submission" date="2008-10" db="EMBL/GenBank/DDBJ databases">
        <title>Genome sequence of Bacillus cereus B4264.</title>
        <authorList>
            <person name="Dodson R.J."/>
            <person name="Durkin A.S."/>
            <person name="Rosovitz M.J."/>
            <person name="Rasko D.A."/>
            <person name="Hoffmaster A."/>
            <person name="Ravel J."/>
            <person name="Sutton G."/>
        </authorList>
    </citation>
    <scope>NUCLEOTIDE SEQUENCE [LARGE SCALE GENOMIC DNA]</scope>
    <source>
        <strain>B4264</strain>
    </source>
</reference>
<comment type="function">
    <text evidence="1">Forms part of the ribosomal stalk, playing a central role in the interaction of the ribosome with GTP-bound translation factors.</text>
</comment>
<comment type="subunit">
    <text evidence="1">Part of the ribosomal stalk of the 50S ribosomal subunit. The N-terminus interacts with L11 and the large rRNA to form the base of the stalk. The C-terminus forms an elongated spine to which L12 dimers bind in a sequential fashion forming a multimeric L10(L12)X complex.</text>
</comment>
<comment type="similarity">
    <text evidence="1">Belongs to the universal ribosomal protein uL10 family.</text>
</comment>
<evidence type="ECO:0000255" key="1">
    <source>
        <dbReference type="HAMAP-Rule" id="MF_00362"/>
    </source>
</evidence>
<evidence type="ECO:0000305" key="2"/>
<proteinExistence type="inferred from homology"/>